<proteinExistence type="evidence at protein level"/>
<gene>
    <name type="primary">HBA</name>
</gene>
<accession>P09906</accession>
<keyword id="KW-0903">Direct protein sequencing</keyword>
<keyword id="KW-0349">Heme</keyword>
<keyword id="KW-0408">Iron</keyword>
<keyword id="KW-0479">Metal-binding</keyword>
<keyword id="KW-0561">Oxygen transport</keyword>
<keyword id="KW-0597">Phosphoprotein</keyword>
<keyword id="KW-0813">Transport</keyword>
<organism>
    <name type="scientific">Rhinoceros unicornis</name>
    <name type="common">Greater Indian rhinoceros</name>
    <dbReference type="NCBI Taxonomy" id="9809"/>
    <lineage>
        <taxon>Eukaryota</taxon>
        <taxon>Metazoa</taxon>
        <taxon>Chordata</taxon>
        <taxon>Craniata</taxon>
        <taxon>Vertebrata</taxon>
        <taxon>Euteleostomi</taxon>
        <taxon>Mammalia</taxon>
        <taxon>Eutheria</taxon>
        <taxon>Laurasiatheria</taxon>
        <taxon>Perissodactyla</taxon>
        <taxon>Rhinocerotidae</taxon>
        <taxon>Rhinoceros</taxon>
    </lineage>
</organism>
<sequence>VLSPTDKTNVKTAWSHVGAHAGEYGAEALERMFLSFPTTKTYFPHFDLSHGSAQVKAHGKKVGDALTQAVGHLDDLPGALSALSDLHAYKLRVDPVNFKLLSHCLLVTLALHNPQDFTPAVHASLDKFLSNVSTVLTSKYR</sequence>
<dbReference type="PIR" id="A26543">
    <property type="entry name" value="A26543"/>
</dbReference>
<dbReference type="SMR" id="P09906"/>
<dbReference type="GO" id="GO:0072562">
    <property type="term" value="C:blood microparticle"/>
    <property type="evidence" value="ECO:0007669"/>
    <property type="project" value="TreeGrafter"/>
</dbReference>
<dbReference type="GO" id="GO:0031838">
    <property type="term" value="C:haptoglobin-hemoglobin complex"/>
    <property type="evidence" value="ECO:0007669"/>
    <property type="project" value="TreeGrafter"/>
</dbReference>
<dbReference type="GO" id="GO:0005833">
    <property type="term" value="C:hemoglobin complex"/>
    <property type="evidence" value="ECO:0007669"/>
    <property type="project" value="InterPro"/>
</dbReference>
<dbReference type="GO" id="GO:0031720">
    <property type="term" value="F:haptoglobin binding"/>
    <property type="evidence" value="ECO:0007669"/>
    <property type="project" value="TreeGrafter"/>
</dbReference>
<dbReference type="GO" id="GO:0020037">
    <property type="term" value="F:heme binding"/>
    <property type="evidence" value="ECO:0007669"/>
    <property type="project" value="InterPro"/>
</dbReference>
<dbReference type="GO" id="GO:0005506">
    <property type="term" value="F:iron ion binding"/>
    <property type="evidence" value="ECO:0007669"/>
    <property type="project" value="InterPro"/>
</dbReference>
<dbReference type="GO" id="GO:0043177">
    <property type="term" value="F:organic acid binding"/>
    <property type="evidence" value="ECO:0007669"/>
    <property type="project" value="TreeGrafter"/>
</dbReference>
<dbReference type="GO" id="GO:0019825">
    <property type="term" value="F:oxygen binding"/>
    <property type="evidence" value="ECO:0007669"/>
    <property type="project" value="InterPro"/>
</dbReference>
<dbReference type="GO" id="GO:0005344">
    <property type="term" value="F:oxygen carrier activity"/>
    <property type="evidence" value="ECO:0007669"/>
    <property type="project" value="UniProtKB-KW"/>
</dbReference>
<dbReference type="GO" id="GO:0004601">
    <property type="term" value="F:peroxidase activity"/>
    <property type="evidence" value="ECO:0007669"/>
    <property type="project" value="TreeGrafter"/>
</dbReference>
<dbReference type="GO" id="GO:0042744">
    <property type="term" value="P:hydrogen peroxide catabolic process"/>
    <property type="evidence" value="ECO:0007669"/>
    <property type="project" value="TreeGrafter"/>
</dbReference>
<dbReference type="CDD" id="cd08927">
    <property type="entry name" value="Hb-alpha-like"/>
    <property type="match status" value="1"/>
</dbReference>
<dbReference type="FunFam" id="1.10.490.10:FF:000002">
    <property type="entry name" value="Hemoglobin subunit alpha"/>
    <property type="match status" value="1"/>
</dbReference>
<dbReference type="Gene3D" id="1.10.490.10">
    <property type="entry name" value="Globins"/>
    <property type="match status" value="1"/>
</dbReference>
<dbReference type="InterPro" id="IPR000971">
    <property type="entry name" value="Globin"/>
</dbReference>
<dbReference type="InterPro" id="IPR009050">
    <property type="entry name" value="Globin-like_sf"/>
</dbReference>
<dbReference type="InterPro" id="IPR012292">
    <property type="entry name" value="Globin/Proto"/>
</dbReference>
<dbReference type="InterPro" id="IPR002338">
    <property type="entry name" value="Hemoglobin_a-typ"/>
</dbReference>
<dbReference type="InterPro" id="IPR050056">
    <property type="entry name" value="Hemoglobin_oxygen_transport"/>
</dbReference>
<dbReference type="InterPro" id="IPR002339">
    <property type="entry name" value="Hemoglobin_pi"/>
</dbReference>
<dbReference type="PANTHER" id="PTHR11442">
    <property type="entry name" value="HEMOGLOBIN FAMILY MEMBER"/>
    <property type="match status" value="1"/>
</dbReference>
<dbReference type="PANTHER" id="PTHR11442:SF48">
    <property type="entry name" value="HEMOGLOBIN SUBUNIT ALPHA"/>
    <property type="match status" value="1"/>
</dbReference>
<dbReference type="Pfam" id="PF00042">
    <property type="entry name" value="Globin"/>
    <property type="match status" value="1"/>
</dbReference>
<dbReference type="PRINTS" id="PR00612">
    <property type="entry name" value="ALPHAHAEM"/>
</dbReference>
<dbReference type="PRINTS" id="PR00815">
    <property type="entry name" value="PIHAEM"/>
</dbReference>
<dbReference type="SUPFAM" id="SSF46458">
    <property type="entry name" value="Globin-like"/>
    <property type="match status" value="1"/>
</dbReference>
<dbReference type="PROSITE" id="PS01033">
    <property type="entry name" value="GLOBIN"/>
    <property type="match status" value="1"/>
</dbReference>
<name>HBA_RHIUN</name>
<comment type="function">
    <text>Involved in oxygen transport from the lung to the various peripheral tissues.</text>
</comment>
<comment type="function">
    <molecule>Hemopressin</molecule>
    <text evidence="2">Hemopressin acts as an antagonist peptide of the cannabinoid receptor CNR1. Hemopressin-binding efficiently blocks cannabinoid receptor CNR1 and subsequent signaling.</text>
</comment>
<comment type="subunit">
    <text>Heterotetramer of two alpha chains and two beta chains.</text>
</comment>
<comment type="tissue specificity">
    <text>Red blood cells.</text>
</comment>
<comment type="similarity">
    <text evidence="4">Belongs to the globin family.</text>
</comment>
<evidence type="ECO:0000250" key="1">
    <source>
        <dbReference type="UniProtKB" id="P01942"/>
    </source>
</evidence>
<evidence type="ECO:0000250" key="2">
    <source>
        <dbReference type="UniProtKB" id="P01946"/>
    </source>
</evidence>
<evidence type="ECO:0000250" key="3">
    <source>
        <dbReference type="UniProtKB" id="P69905"/>
    </source>
</evidence>
<evidence type="ECO:0000255" key="4">
    <source>
        <dbReference type="PROSITE-ProRule" id="PRU00238"/>
    </source>
</evidence>
<protein>
    <recommendedName>
        <fullName>Hemoglobin subunit alpha</fullName>
    </recommendedName>
    <alternativeName>
        <fullName>Alpha-globin</fullName>
    </alternativeName>
    <alternativeName>
        <fullName>Hemoglobin alpha chain</fullName>
    </alternativeName>
    <component>
        <recommendedName>
            <fullName evidence="2">Hemopressin</fullName>
        </recommendedName>
    </component>
</protein>
<reference key="1">
    <citation type="journal article" date="1987" name="Biol. Chem. Hoppe-Seyler">
        <title>Molecular basis for ATP/2,3-bisphosphoglycerate control switch-over (poikilotherm/homeotherm) an intermediate amino-acid sequence in the hemoglobin of the great Indian rhinoceros (Rhinoceros unicornis, Perissodactyla).</title>
        <authorList>
            <person name="Abbasi A."/>
            <person name="Weber R.E."/>
            <person name="Braunitzer G."/>
            <person name="Goltenboth R."/>
        </authorList>
    </citation>
    <scope>PROTEIN SEQUENCE</scope>
</reference>
<feature type="chain" id="PRO_0000052753" description="Hemoglobin subunit alpha">
    <location>
        <begin position="1"/>
        <end position="141"/>
    </location>
</feature>
<feature type="peptide" id="PRO_0000455939" description="Hemopressin" evidence="2">
    <location>
        <begin position="95"/>
        <end position="103"/>
    </location>
</feature>
<feature type="domain" description="Globin" evidence="4">
    <location>
        <begin position="1"/>
        <end position="141"/>
    </location>
</feature>
<feature type="binding site" evidence="4">
    <location>
        <position position="58"/>
    </location>
    <ligand>
        <name>O2</name>
        <dbReference type="ChEBI" id="CHEBI:15379"/>
    </ligand>
</feature>
<feature type="binding site" description="proximal binding residue" evidence="4">
    <location>
        <position position="87"/>
    </location>
    <ligand>
        <name>heme b</name>
        <dbReference type="ChEBI" id="CHEBI:60344"/>
    </ligand>
    <ligandPart>
        <name>Fe</name>
        <dbReference type="ChEBI" id="CHEBI:18248"/>
    </ligandPart>
</feature>
<feature type="modified residue" description="Phosphoserine" evidence="3">
    <location>
        <position position="3"/>
    </location>
</feature>
<feature type="modified residue" description="N6-succinyllysine" evidence="1">
    <location>
        <position position="7"/>
    </location>
</feature>
<feature type="modified residue" description="Phosphothreonine" evidence="3">
    <location>
        <position position="8"/>
    </location>
</feature>
<feature type="modified residue" description="N6-succinyllysine" evidence="1">
    <location>
        <position position="11"/>
    </location>
</feature>
<feature type="modified residue" description="Phosphotyrosine" evidence="3">
    <location>
        <position position="24"/>
    </location>
</feature>
<feature type="modified residue" description="Phosphoserine" evidence="3">
    <location>
        <position position="35"/>
    </location>
</feature>
<feature type="modified residue" description="N6-succinyllysine" evidence="1">
    <location>
        <position position="40"/>
    </location>
</feature>
<feature type="modified residue" description="Phosphoserine" evidence="3">
    <location>
        <position position="49"/>
    </location>
</feature>
<feature type="modified residue" description="Phosphoserine" evidence="1">
    <location>
        <position position="102"/>
    </location>
</feature>
<feature type="modified residue" description="Phosphothreonine" evidence="1">
    <location>
        <position position="108"/>
    </location>
</feature>
<feature type="modified residue" description="Phosphoserine" evidence="1">
    <location>
        <position position="124"/>
    </location>
</feature>
<feature type="modified residue" description="Phosphothreonine" evidence="1">
    <location>
        <position position="134"/>
    </location>
</feature>
<feature type="modified residue" description="Phosphothreonine" evidence="1">
    <location>
        <position position="137"/>
    </location>
</feature>
<feature type="modified residue" description="Phosphoserine" evidence="1">
    <location>
        <position position="138"/>
    </location>
</feature>